<sequence length="121" mass="14081">DLWQFNKMIKKEVGKLPFPFYGAYGCYCGWGGRGEKPKDGTDRCCFVHDCCYKKLTGCPKWDDRYSYSWKDITIVCGEDLPCEEICECDRAAAVCFYENLGTYNKKYMKHLKPCKKADYPC</sequence>
<comment type="function">
    <text evidence="4">Snake venom phospholipase A2 (PLA2) that shows enzymatic activity in the presence of a synthetic substrate. In vitro, blocks the neuromuscular transmission in young chick biventer cervicis preparations. In mice, induces myonecrosis and a systemic interleukin-6 response upon intramuscular injection. Also induces edema and exerts a strong pro-inflammatory effect. PLA2 catalyzes the calcium-dependent hydrolysis of the 2-acyl groups in 3-sn-phosphoglycerides.</text>
</comment>
<comment type="catalytic activity">
    <reaction evidence="2 3">
        <text>a 1,2-diacyl-sn-glycero-3-phosphocholine + H2O = a 1-acyl-sn-glycero-3-phosphocholine + a fatty acid + H(+)</text>
        <dbReference type="Rhea" id="RHEA:15801"/>
        <dbReference type="ChEBI" id="CHEBI:15377"/>
        <dbReference type="ChEBI" id="CHEBI:15378"/>
        <dbReference type="ChEBI" id="CHEBI:28868"/>
        <dbReference type="ChEBI" id="CHEBI:57643"/>
        <dbReference type="ChEBI" id="CHEBI:58168"/>
        <dbReference type="EC" id="3.1.1.4"/>
    </reaction>
</comment>
<comment type="cofactor">
    <cofactor evidence="4">
        <name>Ca(2+)</name>
        <dbReference type="ChEBI" id="CHEBI:29108"/>
    </cofactor>
    <text evidence="4">Binds 1 Ca(2+) ion.</text>
</comment>
<comment type="activity regulation">
    <text evidence="4">Inhibited by magnesium, cadmium and manganese ions. Also inhibited by crotapotin.</text>
</comment>
<comment type="biophysicochemical properties">
    <phDependence>
        <text evidence="4">Optimum pH is 8.0.</text>
    </phDependence>
    <temperatureDependence>
        <text evidence="4">Optimum temperature is 35-45 degrees Celsius.</text>
    </temperatureDependence>
</comment>
<comment type="subcellular location">
    <subcellularLocation>
        <location evidence="4">Secreted</location>
    </subcellularLocation>
</comment>
<comment type="tissue specificity">
    <text>Expressed by the venom gland.</text>
</comment>
<comment type="mass spectrometry" mass="14238.71" method="MALDI" evidence="4"/>
<comment type="similarity">
    <text evidence="5">Belongs to the phospholipase A2 family. Group II subfamily. D49 sub-subfamily.</text>
</comment>
<dbReference type="EC" id="3.1.1.4"/>
<dbReference type="SMR" id="P0C8M1"/>
<dbReference type="GO" id="GO:0005576">
    <property type="term" value="C:extracellular region"/>
    <property type="evidence" value="ECO:0007669"/>
    <property type="project" value="UniProtKB-SubCell"/>
</dbReference>
<dbReference type="GO" id="GO:0005509">
    <property type="term" value="F:calcium ion binding"/>
    <property type="evidence" value="ECO:0007669"/>
    <property type="project" value="InterPro"/>
</dbReference>
<dbReference type="GO" id="GO:0047498">
    <property type="term" value="F:calcium-dependent phospholipase A2 activity"/>
    <property type="evidence" value="ECO:0007669"/>
    <property type="project" value="TreeGrafter"/>
</dbReference>
<dbReference type="GO" id="GO:0005543">
    <property type="term" value="F:phospholipid binding"/>
    <property type="evidence" value="ECO:0007669"/>
    <property type="project" value="TreeGrafter"/>
</dbReference>
<dbReference type="GO" id="GO:0090729">
    <property type="term" value="F:toxin activity"/>
    <property type="evidence" value="ECO:0007669"/>
    <property type="project" value="UniProtKB-KW"/>
</dbReference>
<dbReference type="GO" id="GO:0050482">
    <property type="term" value="P:arachidonate secretion"/>
    <property type="evidence" value="ECO:0007669"/>
    <property type="project" value="InterPro"/>
</dbReference>
<dbReference type="GO" id="GO:0016042">
    <property type="term" value="P:lipid catabolic process"/>
    <property type="evidence" value="ECO:0007669"/>
    <property type="project" value="UniProtKB-KW"/>
</dbReference>
<dbReference type="GO" id="GO:0042130">
    <property type="term" value="P:negative regulation of T cell proliferation"/>
    <property type="evidence" value="ECO:0007669"/>
    <property type="project" value="TreeGrafter"/>
</dbReference>
<dbReference type="GO" id="GO:0006644">
    <property type="term" value="P:phospholipid metabolic process"/>
    <property type="evidence" value="ECO:0007669"/>
    <property type="project" value="InterPro"/>
</dbReference>
<dbReference type="CDD" id="cd00125">
    <property type="entry name" value="PLA2c"/>
    <property type="match status" value="1"/>
</dbReference>
<dbReference type="FunFam" id="1.20.90.10:FF:000001">
    <property type="entry name" value="Basic phospholipase A2 homolog"/>
    <property type="match status" value="1"/>
</dbReference>
<dbReference type="Gene3D" id="1.20.90.10">
    <property type="entry name" value="Phospholipase A2 domain"/>
    <property type="match status" value="1"/>
</dbReference>
<dbReference type="InterPro" id="IPR001211">
    <property type="entry name" value="PLipase_A2"/>
</dbReference>
<dbReference type="InterPro" id="IPR033112">
    <property type="entry name" value="PLipase_A2_Asp_AS"/>
</dbReference>
<dbReference type="InterPro" id="IPR016090">
    <property type="entry name" value="PLipase_A2_dom"/>
</dbReference>
<dbReference type="InterPro" id="IPR036444">
    <property type="entry name" value="PLipase_A2_dom_sf"/>
</dbReference>
<dbReference type="InterPro" id="IPR033113">
    <property type="entry name" value="PLipase_A2_His_AS"/>
</dbReference>
<dbReference type="PANTHER" id="PTHR11716">
    <property type="entry name" value="PHOSPHOLIPASE A2 FAMILY MEMBER"/>
    <property type="match status" value="1"/>
</dbReference>
<dbReference type="PANTHER" id="PTHR11716:SF9">
    <property type="entry name" value="PHOSPHOLIPASE A2, MEMBRANE ASSOCIATED"/>
    <property type="match status" value="1"/>
</dbReference>
<dbReference type="Pfam" id="PF00068">
    <property type="entry name" value="Phospholip_A2_1"/>
    <property type="match status" value="1"/>
</dbReference>
<dbReference type="PRINTS" id="PR00389">
    <property type="entry name" value="PHPHLIPASEA2"/>
</dbReference>
<dbReference type="SMART" id="SM00085">
    <property type="entry name" value="PA2c"/>
    <property type="match status" value="1"/>
</dbReference>
<dbReference type="SUPFAM" id="SSF48619">
    <property type="entry name" value="Phospholipase A2, PLA2"/>
    <property type="match status" value="1"/>
</dbReference>
<dbReference type="PROSITE" id="PS00119">
    <property type="entry name" value="PA2_ASP"/>
    <property type="match status" value="1"/>
</dbReference>
<dbReference type="PROSITE" id="PS00118">
    <property type="entry name" value="PA2_HIS"/>
    <property type="match status" value="1"/>
</dbReference>
<feature type="chain" id="PRO_0000359436" description="Basic phospholipase A2 BmTX-I">
    <location>
        <begin position="1"/>
        <end position="121"/>
    </location>
</feature>
<feature type="active site" evidence="1">
    <location>
        <position position="48"/>
    </location>
</feature>
<feature type="active site" evidence="1">
    <location>
        <position position="89"/>
    </location>
</feature>
<feature type="binding site" evidence="1">
    <location>
        <position position="27"/>
    </location>
    <ligand>
        <name>Ca(2+)</name>
        <dbReference type="ChEBI" id="CHEBI:29108"/>
    </ligand>
</feature>
<feature type="binding site" evidence="1">
    <location>
        <position position="29"/>
    </location>
    <ligand>
        <name>Ca(2+)</name>
        <dbReference type="ChEBI" id="CHEBI:29108"/>
    </ligand>
</feature>
<feature type="binding site" evidence="1">
    <location>
        <position position="31"/>
    </location>
    <ligand>
        <name>Ca(2+)</name>
        <dbReference type="ChEBI" id="CHEBI:29108"/>
    </ligand>
</feature>
<feature type="binding site" evidence="1">
    <location>
        <position position="49"/>
    </location>
    <ligand>
        <name>Ca(2+)</name>
        <dbReference type="ChEBI" id="CHEBI:29108"/>
    </ligand>
</feature>
<feature type="disulfide bond" evidence="1">
    <location>
        <begin position="26"/>
        <end position="114"/>
    </location>
</feature>
<feature type="disulfide bond" evidence="1">
    <location>
        <begin position="28"/>
        <end position="45"/>
    </location>
</feature>
<feature type="disulfide bond" evidence="1">
    <location>
        <begin position="44"/>
        <end position="95"/>
    </location>
</feature>
<feature type="disulfide bond" evidence="1">
    <location>
        <begin position="50"/>
        <end position="121"/>
    </location>
</feature>
<feature type="disulfide bond" evidence="1">
    <location>
        <begin position="51"/>
        <end position="88"/>
    </location>
</feature>
<feature type="disulfide bond" evidence="1">
    <location>
        <begin position="58"/>
        <end position="82"/>
    </location>
</feature>
<feature type="disulfide bond" evidence="1">
    <location>
        <begin position="76"/>
        <end position="86"/>
    </location>
</feature>
<organism>
    <name type="scientific">Bothrops moojeni</name>
    <name type="common">Lance-headed viper</name>
    <name type="synonym">Caissaca</name>
    <dbReference type="NCBI Taxonomy" id="98334"/>
    <lineage>
        <taxon>Eukaryota</taxon>
        <taxon>Metazoa</taxon>
        <taxon>Chordata</taxon>
        <taxon>Craniata</taxon>
        <taxon>Vertebrata</taxon>
        <taxon>Euteleostomi</taxon>
        <taxon>Lepidosauria</taxon>
        <taxon>Squamata</taxon>
        <taxon>Bifurcata</taxon>
        <taxon>Unidentata</taxon>
        <taxon>Episquamata</taxon>
        <taxon>Toxicofera</taxon>
        <taxon>Serpentes</taxon>
        <taxon>Colubroidea</taxon>
        <taxon>Viperidae</taxon>
        <taxon>Crotalinae</taxon>
        <taxon>Bothrops</taxon>
    </lineage>
</organism>
<reference key="1">
    <citation type="journal article" date="2008" name="Toxicon">
        <title>Biological and biochemical characterization of new basic phospholipase A(2) BmTX-I isolated from Bothrops moojeni snake venom.</title>
        <authorList>
            <person name="Calgarotto A.K."/>
            <person name="Damico D.C.S."/>
            <person name="Ponce-Soto L.A."/>
            <person name="Baldasso P.A."/>
            <person name="Da Silva S.L."/>
            <person name="Souza G.H.M.F."/>
            <person name="Eberlin M.N."/>
            <person name="Marangoni S."/>
        </authorList>
    </citation>
    <scope>PROTEIN SEQUENCE</scope>
    <scope>FUNCTION</scope>
    <scope>COFACTOR</scope>
    <scope>ACTIVITY REGULATION</scope>
    <scope>BIOPHYSICOCHEMICAL PROPERTIES</scope>
    <scope>SUBCELLULAR LOCATION</scope>
    <scope>MASS SPECTROMETRY</scope>
    <source>
        <tissue>Venom</tissue>
    </source>
</reference>
<evidence type="ECO:0000250" key="1"/>
<evidence type="ECO:0000255" key="2">
    <source>
        <dbReference type="PROSITE-ProRule" id="PRU10035"/>
    </source>
</evidence>
<evidence type="ECO:0000255" key="3">
    <source>
        <dbReference type="PROSITE-ProRule" id="PRU10036"/>
    </source>
</evidence>
<evidence type="ECO:0000269" key="4">
    <source>
    </source>
</evidence>
<evidence type="ECO:0000305" key="5"/>
<protein>
    <recommendedName>
        <fullName>Basic phospholipase A2 BmTX-I</fullName>
        <shortName>svPLA2</shortName>
        <ecNumber>3.1.1.4</ecNumber>
    </recommendedName>
    <alternativeName>
        <fullName>Phosphatidylcholine 2-acylhydrolase</fullName>
    </alternativeName>
</protein>
<accession>P0C8M1</accession>
<keyword id="KW-0106">Calcium</keyword>
<keyword id="KW-0903">Direct protein sequencing</keyword>
<keyword id="KW-1015">Disulfide bond</keyword>
<keyword id="KW-0378">Hydrolase</keyword>
<keyword id="KW-0442">Lipid degradation</keyword>
<keyword id="KW-0443">Lipid metabolism</keyword>
<keyword id="KW-0479">Metal-binding</keyword>
<keyword id="KW-0959">Myotoxin</keyword>
<keyword id="KW-0528">Neurotoxin</keyword>
<keyword id="KW-0964">Secreted</keyword>
<keyword id="KW-0800">Toxin</keyword>
<name>PA2B1_BOTMO</name>
<proteinExistence type="evidence at protein level"/>